<dbReference type="EC" id="2.1.1.192" evidence="1"/>
<dbReference type="EMBL" id="AE015924">
    <property type="protein sequence ID" value="AAQ67026.1"/>
    <property type="molecule type" value="Genomic_DNA"/>
</dbReference>
<dbReference type="SMR" id="Q7MTB0"/>
<dbReference type="STRING" id="242619.PG_2065"/>
<dbReference type="DNASU" id="2552858"/>
<dbReference type="EnsemblBacteria" id="AAQ67026">
    <property type="protein sequence ID" value="AAQ67026"/>
    <property type="gene ID" value="PG_2065"/>
</dbReference>
<dbReference type="KEGG" id="pgi:PG_2065"/>
<dbReference type="eggNOG" id="COG0820">
    <property type="taxonomic scope" value="Bacteria"/>
</dbReference>
<dbReference type="HOGENOM" id="CLU_029101_0_0_10"/>
<dbReference type="Proteomes" id="UP000000588">
    <property type="component" value="Chromosome"/>
</dbReference>
<dbReference type="GO" id="GO:0005737">
    <property type="term" value="C:cytoplasm"/>
    <property type="evidence" value="ECO:0007669"/>
    <property type="project" value="UniProtKB-SubCell"/>
</dbReference>
<dbReference type="GO" id="GO:0051539">
    <property type="term" value="F:4 iron, 4 sulfur cluster binding"/>
    <property type="evidence" value="ECO:0007669"/>
    <property type="project" value="UniProtKB-UniRule"/>
</dbReference>
<dbReference type="GO" id="GO:0046872">
    <property type="term" value="F:metal ion binding"/>
    <property type="evidence" value="ECO:0007669"/>
    <property type="project" value="UniProtKB-KW"/>
</dbReference>
<dbReference type="GO" id="GO:0070040">
    <property type="term" value="F:rRNA (adenine(2503)-C2-)-methyltransferase activity"/>
    <property type="evidence" value="ECO:0007669"/>
    <property type="project" value="UniProtKB-UniRule"/>
</dbReference>
<dbReference type="GO" id="GO:0019843">
    <property type="term" value="F:rRNA binding"/>
    <property type="evidence" value="ECO:0007669"/>
    <property type="project" value="UniProtKB-UniRule"/>
</dbReference>
<dbReference type="GO" id="GO:0002935">
    <property type="term" value="F:tRNA (adenine(37)-C2)-methyltransferase activity"/>
    <property type="evidence" value="ECO:0007669"/>
    <property type="project" value="UniProtKB-UniRule"/>
</dbReference>
<dbReference type="GO" id="GO:0000049">
    <property type="term" value="F:tRNA binding"/>
    <property type="evidence" value="ECO:0007669"/>
    <property type="project" value="UniProtKB-UniRule"/>
</dbReference>
<dbReference type="GO" id="GO:0070475">
    <property type="term" value="P:rRNA base methylation"/>
    <property type="evidence" value="ECO:0007669"/>
    <property type="project" value="UniProtKB-UniRule"/>
</dbReference>
<dbReference type="GO" id="GO:0030488">
    <property type="term" value="P:tRNA methylation"/>
    <property type="evidence" value="ECO:0007669"/>
    <property type="project" value="UniProtKB-UniRule"/>
</dbReference>
<dbReference type="CDD" id="cd01335">
    <property type="entry name" value="Radical_SAM"/>
    <property type="match status" value="1"/>
</dbReference>
<dbReference type="Gene3D" id="1.10.150.530">
    <property type="match status" value="1"/>
</dbReference>
<dbReference type="Gene3D" id="3.20.20.70">
    <property type="entry name" value="Aldolase class I"/>
    <property type="match status" value="1"/>
</dbReference>
<dbReference type="HAMAP" id="MF_01849">
    <property type="entry name" value="RNA_methyltr_RlmN"/>
    <property type="match status" value="1"/>
</dbReference>
<dbReference type="InterPro" id="IPR013785">
    <property type="entry name" value="Aldolase_TIM"/>
</dbReference>
<dbReference type="InterPro" id="IPR040072">
    <property type="entry name" value="Methyltransferase_A"/>
</dbReference>
<dbReference type="InterPro" id="IPR048641">
    <property type="entry name" value="RlmN_N"/>
</dbReference>
<dbReference type="InterPro" id="IPR027492">
    <property type="entry name" value="RNA_MTrfase_RlmN"/>
</dbReference>
<dbReference type="InterPro" id="IPR004383">
    <property type="entry name" value="rRNA_lsu_MTrfase_RlmN/Cfr"/>
</dbReference>
<dbReference type="InterPro" id="IPR007197">
    <property type="entry name" value="rSAM"/>
</dbReference>
<dbReference type="NCBIfam" id="TIGR00048">
    <property type="entry name" value="rRNA_mod_RlmN"/>
    <property type="match status" value="1"/>
</dbReference>
<dbReference type="PANTHER" id="PTHR30544">
    <property type="entry name" value="23S RRNA METHYLTRANSFERASE"/>
    <property type="match status" value="1"/>
</dbReference>
<dbReference type="PANTHER" id="PTHR30544:SF5">
    <property type="entry name" value="RADICAL SAM CORE DOMAIN-CONTAINING PROTEIN"/>
    <property type="match status" value="1"/>
</dbReference>
<dbReference type="Pfam" id="PF04055">
    <property type="entry name" value="Radical_SAM"/>
    <property type="match status" value="1"/>
</dbReference>
<dbReference type="Pfam" id="PF21016">
    <property type="entry name" value="RlmN_N"/>
    <property type="match status" value="1"/>
</dbReference>
<dbReference type="PIRSF" id="PIRSF006004">
    <property type="entry name" value="CHP00048"/>
    <property type="match status" value="1"/>
</dbReference>
<dbReference type="SFLD" id="SFLDF00275">
    <property type="entry name" value="adenosine_C2_methyltransferase"/>
    <property type="match status" value="1"/>
</dbReference>
<dbReference type="SFLD" id="SFLDG01062">
    <property type="entry name" value="methyltransferase_(Class_A)"/>
    <property type="match status" value="1"/>
</dbReference>
<dbReference type="SUPFAM" id="SSF102114">
    <property type="entry name" value="Radical SAM enzymes"/>
    <property type="match status" value="1"/>
</dbReference>
<dbReference type="PROSITE" id="PS51918">
    <property type="entry name" value="RADICAL_SAM"/>
    <property type="match status" value="1"/>
</dbReference>
<name>RLMN_PORGI</name>
<accession>Q7MTB0</accession>
<organism>
    <name type="scientific">Porphyromonas gingivalis (strain ATCC BAA-308 / W83)</name>
    <dbReference type="NCBI Taxonomy" id="242619"/>
    <lineage>
        <taxon>Bacteria</taxon>
        <taxon>Pseudomonadati</taxon>
        <taxon>Bacteroidota</taxon>
        <taxon>Bacteroidia</taxon>
        <taxon>Bacteroidales</taxon>
        <taxon>Porphyromonadaceae</taxon>
        <taxon>Porphyromonas</taxon>
    </lineage>
</organism>
<proteinExistence type="inferred from homology"/>
<feature type="chain" id="PRO_0000350311" description="Probable dual-specificity RNA methyltransferase RlmN">
    <location>
        <begin position="1"/>
        <end position="341"/>
    </location>
</feature>
<feature type="domain" description="Radical SAM core" evidence="2">
    <location>
        <begin position="94"/>
        <end position="314"/>
    </location>
</feature>
<feature type="active site" description="Proton acceptor" evidence="1">
    <location>
        <position position="88"/>
    </location>
</feature>
<feature type="active site" description="S-methylcysteine intermediate" evidence="1">
    <location>
        <position position="325"/>
    </location>
</feature>
<feature type="binding site" evidence="1">
    <location>
        <position position="108"/>
    </location>
    <ligand>
        <name>[4Fe-4S] cluster</name>
        <dbReference type="ChEBI" id="CHEBI:49883"/>
        <note>4Fe-4S-S-AdoMet</note>
    </ligand>
</feature>
<feature type="binding site" evidence="1">
    <location>
        <position position="112"/>
    </location>
    <ligand>
        <name>[4Fe-4S] cluster</name>
        <dbReference type="ChEBI" id="CHEBI:49883"/>
        <note>4Fe-4S-S-AdoMet</note>
    </ligand>
</feature>
<feature type="binding site" evidence="1">
    <location>
        <position position="115"/>
    </location>
    <ligand>
        <name>[4Fe-4S] cluster</name>
        <dbReference type="ChEBI" id="CHEBI:49883"/>
        <note>4Fe-4S-S-AdoMet</note>
    </ligand>
</feature>
<feature type="binding site" evidence="1">
    <location>
        <begin position="153"/>
        <end position="154"/>
    </location>
    <ligand>
        <name>S-adenosyl-L-methionine</name>
        <dbReference type="ChEBI" id="CHEBI:59789"/>
    </ligand>
</feature>
<feature type="binding site" evidence="1">
    <location>
        <position position="185"/>
    </location>
    <ligand>
        <name>S-adenosyl-L-methionine</name>
        <dbReference type="ChEBI" id="CHEBI:59789"/>
    </ligand>
</feature>
<feature type="binding site" evidence="1">
    <location>
        <begin position="206"/>
        <end position="208"/>
    </location>
    <ligand>
        <name>S-adenosyl-L-methionine</name>
        <dbReference type="ChEBI" id="CHEBI:59789"/>
    </ligand>
</feature>
<feature type="binding site" evidence="1">
    <location>
        <position position="282"/>
    </location>
    <ligand>
        <name>S-adenosyl-L-methionine</name>
        <dbReference type="ChEBI" id="CHEBI:59789"/>
    </ligand>
</feature>
<feature type="disulfide bond" description="(transient)" evidence="1">
    <location>
        <begin position="101"/>
        <end position="325"/>
    </location>
</feature>
<evidence type="ECO:0000255" key="1">
    <source>
        <dbReference type="HAMAP-Rule" id="MF_01849"/>
    </source>
</evidence>
<evidence type="ECO:0000255" key="2">
    <source>
        <dbReference type="PROSITE-ProRule" id="PRU01266"/>
    </source>
</evidence>
<keyword id="KW-0004">4Fe-4S</keyword>
<keyword id="KW-0963">Cytoplasm</keyword>
<keyword id="KW-1015">Disulfide bond</keyword>
<keyword id="KW-0408">Iron</keyword>
<keyword id="KW-0411">Iron-sulfur</keyword>
<keyword id="KW-0479">Metal-binding</keyword>
<keyword id="KW-0489">Methyltransferase</keyword>
<keyword id="KW-1185">Reference proteome</keyword>
<keyword id="KW-0698">rRNA processing</keyword>
<keyword id="KW-0949">S-adenosyl-L-methionine</keyword>
<keyword id="KW-0808">Transferase</keyword>
<keyword id="KW-0819">tRNA processing</keyword>
<gene>
    <name evidence="1" type="primary">rlmN</name>
    <name type="ordered locus">PG_2065</name>
</gene>
<reference key="1">
    <citation type="journal article" date="2003" name="J. Bacteriol.">
        <title>Complete genome sequence of the oral pathogenic bacterium Porphyromonas gingivalis strain W83.</title>
        <authorList>
            <person name="Nelson K.E."/>
            <person name="Fleischmann R.D."/>
            <person name="DeBoy R.T."/>
            <person name="Paulsen I.T."/>
            <person name="Fouts D.E."/>
            <person name="Eisen J.A."/>
            <person name="Daugherty S.C."/>
            <person name="Dodson R.J."/>
            <person name="Durkin A.S."/>
            <person name="Gwinn M.L."/>
            <person name="Haft D.H."/>
            <person name="Kolonay J.F."/>
            <person name="Nelson W.C."/>
            <person name="Mason T.M."/>
            <person name="Tallon L."/>
            <person name="Gray J."/>
            <person name="Granger D."/>
            <person name="Tettelin H."/>
            <person name="Dong H."/>
            <person name="Galvin J.L."/>
            <person name="Duncan M.J."/>
            <person name="Dewhirst F.E."/>
            <person name="Fraser C.M."/>
        </authorList>
    </citation>
    <scope>NUCLEOTIDE SEQUENCE [LARGE SCALE GENOMIC DNA]</scope>
    <source>
        <strain>ATCC BAA-308 / W83</strain>
    </source>
</reference>
<sequence>MLLGMSLEELTTVALRMGMPRFAGKQLAEWIYVRRATDFAEMTNISQANRQKLAEIYDLGRYPWSDVQCSVDGTKKYLFPVGEGRFVESVLIPEGDRATLCISSQVGCKMDCLFCMTGKQGWNGNLSAAEILNQIFSVDEAAELTNLVYMGMGEPLDNTDEVLRSIEALTEPWGMGWSPKRITVSTIGAKGLERFLAESRCHLAVSLHSPFPEERRKLMPGEKAFPIMQTLDRIRAYDFSGQRRVSFEYIVFDGLNDDMRHADELAAILRGIPCRINLIRFHKIPAVSLRSSDTARMEAFRKRMESHGFTCTIRASRGEDIFAACGMLSTSKAESSEEKSS</sequence>
<comment type="function">
    <text evidence="1">Specifically methylates position 2 of adenine 2503 in 23S rRNA and position 2 of adenine 37 in tRNAs.</text>
</comment>
<comment type="catalytic activity">
    <reaction evidence="1">
        <text>adenosine(2503) in 23S rRNA + 2 reduced [2Fe-2S]-[ferredoxin] + 2 S-adenosyl-L-methionine = 2-methyladenosine(2503) in 23S rRNA + 5'-deoxyadenosine + L-methionine + 2 oxidized [2Fe-2S]-[ferredoxin] + S-adenosyl-L-homocysteine</text>
        <dbReference type="Rhea" id="RHEA:42916"/>
        <dbReference type="Rhea" id="RHEA-COMP:10000"/>
        <dbReference type="Rhea" id="RHEA-COMP:10001"/>
        <dbReference type="Rhea" id="RHEA-COMP:10152"/>
        <dbReference type="Rhea" id="RHEA-COMP:10282"/>
        <dbReference type="ChEBI" id="CHEBI:17319"/>
        <dbReference type="ChEBI" id="CHEBI:33737"/>
        <dbReference type="ChEBI" id="CHEBI:33738"/>
        <dbReference type="ChEBI" id="CHEBI:57844"/>
        <dbReference type="ChEBI" id="CHEBI:57856"/>
        <dbReference type="ChEBI" id="CHEBI:59789"/>
        <dbReference type="ChEBI" id="CHEBI:74411"/>
        <dbReference type="ChEBI" id="CHEBI:74497"/>
        <dbReference type="EC" id="2.1.1.192"/>
    </reaction>
</comment>
<comment type="catalytic activity">
    <reaction evidence="1">
        <text>adenosine(37) in tRNA + 2 reduced [2Fe-2S]-[ferredoxin] + 2 S-adenosyl-L-methionine = 2-methyladenosine(37) in tRNA + 5'-deoxyadenosine + L-methionine + 2 oxidized [2Fe-2S]-[ferredoxin] + S-adenosyl-L-homocysteine</text>
        <dbReference type="Rhea" id="RHEA:43332"/>
        <dbReference type="Rhea" id="RHEA-COMP:10000"/>
        <dbReference type="Rhea" id="RHEA-COMP:10001"/>
        <dbReference type="Rhea" id="RHEA-COMP:10162"/>
        <dbReference type="Rhea" id="RHEA-COMP:10485"/>
        <dbReference type="ChEBI" id="CHEBI:17319"/>
        <dbReference type="ChEBI" id="CHEBI:33737"/>
        <dbReference type="ChEBI" id="CHEBI:33738"/>
        <dbReference type="ChEBI" id="CHEBI:57844"/>
        <dbReference type="ChEBI" id="CHEBI:57856"/>
        <dbReference type="ChEBI" id="CHEBI:59789"/>
        <dbReference type="ChEBI" id="CHEBI:74411"/>
        <dbReference type="ChEBI" id="CHEBI:74497"/>
        <dbReference type="EC" id="2.1.1.192"/>
    </reaction>
</comment>
<comment type="cofactor">
    <cofactor evidence="1">
        <name>[4Fe-4S] cluster</name>
        <dbReference type="ChEBI" id="CHEBI:49883"/>
    </cofactor>
    <text evidence="1">Binds 1 [4Fe-4S] cluster. The cluster is coordinated with 3 cysteines and an exchangeable S-adenosyl-L-methionine.</text>
</comment>
<comment type="subcellular location">
    <subcellularLocation>
        <location evidence="1">Cytoplasm</location>
    </subcellularLocation>
</comment>
<comment type="miscellaneous">
    <text evidence="1">Reaction proceeds by a ping-pong mechanism involving intermediate methylation of a conserved cysteine residue.</text>
</comment>
<comment type="similarity">
    <text evidence="1">Belongs to the radical SAM superfamily. RlmN family.</text>
</comment>
<protein>
    <recommendedName>
        <fullName evidence="1">Probable dual-specificity RNA methyltransferase RlmN</fullName>
        <ecNumber evidence="1">2.1.1.192</ecNumber>
    </recommendedName>
    <alternativeName>
        <fullName evidence="1">23S rRNA (adenine(2503)-C(2))-methyltransferase</fullName>
    </alternativeName>
    <alternativeName>
        <fullName evidence="1">23S rRNA m2A2503 methyltransferase</fullName>
    </alternativeName>
    <alternativeName>
        <fullName evidence="1">Ribosomal RNA large subunit methyltransferase N</fullName>
    </alternativeName>
    <alternativeName>
        <fullName evidence="1">tRNA (adenine(37)-C(2))-methyltransferase</fullName>
    </alternativeName>
    <alternativeName>
        <fullName evidence="1">tRNA m2A37 methyltransferase</fullName>
    </alternativeName>
</protein>